<comment type="function">
    <text evidence="1">This protein is located at the 30S-50S ribosomal subunit interface and may play a role in the structure and function of the aminoacyl-tRNA binding site.</text>
</comment>
<comment type="similarity">
    <text evidence="1">Belongs to the bacterial ribosomal protein bL19 family.</text>
</comment>
<protein>
    <recommendedName>
        <fullName evidence="1">Large ribosomal subunit protein bL19</fullName>
    </recommendedName>
    <alternativeName>
        <fullName evidence="2">50S ribosomal protein L19</fullName>
    </alternativeName>
</protein>
<accession>B0CAC6</accession>
<proteinExistence type="inferred from homology"/>
<sequence length="120" mass="14009">MHAEEIIRSIEAEHFKETLPTIYVGDTVRVGVQIREGNKERTQPYEGTVIAKRHGGINETITVRRIFQGVGVERVFLIHSPRITNIKVVRRGKVRRAKLYYLRDRVGKATRVKQRFDREL</sequence>
<name>RL19_ACAM1</name>
<reference key="1">
    <citation type="journal article" date="2008" name="Proc. Natl. Acad. Sci. U.S.A.">
        <title>Niche adaptation and genome expansion in the chlorophyll d-producing cyanobacterium Acaryochloris marina.</title>
        <authorList>
            <person name="Swingley W.D."/>
            <person name="Chen M."/>
            <person name="Cheung P.C."/>
            <person name="Conrad A.L."/>
            <person name="Dejesa L.C."/>
            <person name="Hao J."/>
            <person name="Honchak B.M."/>
            <person name="Karbach L.E."/>
            <person name="Kurdoglu A."/>
            <person name="Lahiri S."/>
            <person name="Mastrian S.D."/>
            <person name="Miyashita H."/>
            <person name="Page L."/>
            <person name="Ramakrishna P."/>
            <person name="Satoh S."/>
            <person name="Sattley W.M."/>
            <person name="Shimada Y."/>
            <person name="Taylor H.L."/>
            <person name="Tomo T."/>
            <person name="Tsuchiya T."/>
            <person name="Wang Z.T."/>
            <person name="Raymond J."/>
            <person name="Mimuro M."/>
            <person name="Blankenship R.E."/>
            <person name="Touchman J.W."/>
        </authorList>
    </citation>
    <scope>NUCLEOTIDE SEQUENCE [LARGE SCALE GENOMIC DNA]</scope>
    <source>
        <strain>MBIC 11017</strain>
    </source>
</reference>
<feature type="chain" id="PRO_1000080333" description="Large ribosomal subunit protein bL19">
    <location>
        <begin position="1"/>
        <end position="120"/>
    </location>
</feature>
<evidence type="ECO:0000255" key="1">
    <source>
        <dbReference type="HAMAP-Rule" id="MF_00402"/>
    </source>
</evidence>
<evidence type="ECO:0000305" key="2"/>
<dbReference type="EMBL" id="CP000828">
    <property type="protein sequence ID" value="ABW27861.1"/>
    <property type="molecule type" value="Genomic_DNA"/>
</dbReference>
<dbReference type="RefSeq" id="WP_010475520.1">
    <property type="nucleotide sequence ID" value="NC_009925.1"/>
</dbReference>
<dbReference type="SMR" id="B0CAC6"/>
<dbReference type="STRING" id="329726.AM1_2861"/>
<dbReference type="KEGG" id="amr:AM1_2861"/>
<dbReference type="eggNOG" id="COG0335">
    <property type="taxonomic scope" value="Bacteria"/>
</dbReference>
<dbReference type="HOGENOM" id="CLU_103507_2_0_3"/>
<dbReference type="OrthoDB" id="9803541at2"/>
<dbReference type="Proteomes" id="UP000000268">
    <property type="component" value="Chromosome"/>
</dbReference>
<dbReference type="GO" id="GO:0022625">
    <property type="term" value="C:cytosolic large ribosomal subunit"/>
    <property type="evidence" value="ECO:0007669"/>
    <property type="project" value="TreeGrafter"/>
</dbReference>
<dbReference type="GO" id="GO:0003735">
    <property type="term" value="F:structural constituent of ribosome"/>
    <property type="evidence" value="ECO:0007669"/>
    <property type="project" value="InterPro"/>
</dbReference>
<dbReference type="GO" id="GO:0006412">
    <property type="term" value="P:translation"/>
    <property type="evidence" value="ECO:0007669"/>
    <property type="project" value="UniProtKB-UniRule"/>
</dbReference>
<dbReference type="FunFam" id="2.30.30.790:FF:000001">
    <property type="entry name" value="50S ribosomal protein L19"/>
    <property type="match status" value="1"/>
</dbReference>
<dbReference type="Gene3D" id="2.30.30.790">
    <property type="match status" value="1"/>
</dbReference>
<dbReference type="HAMAP" id="MF_00402">
    <property type="entry name" value="Ribosomal_bL19"/>
    <property type="match status" value="1"/>
</dbReference>
<dbReference type="InterPro" id="IPR001857">
    <property type="entry name" value="Ribosomal_bL19"/>
</dbReference>
<dbReference type="InterPro" id="IPR018257">
    <property type="entry name" value="Ribosomal_bL19_CS"/>
</dbReference>
<dbReference type="InterPro" id="IPR038657">
    <property type="entry name" value="Ribosomal_bL19_sf"/>
</dbReference>
<dbReference type="InterPro" id="IPR008991">
    <property type="entry name" value="Translation_prot_SH3-like_sf"/>
</dbReference>
<dbReference type="NCBIfam" id="TIGR01024">
    <property type="entry name" value="rplS_bact"/>
    <property type="match status" value="1"/>
</dbReference>
<dbReference type="PANTHER" id="PTHR15680:SF9">
    <property type="entry name" value="LARGE RIBOSOMAL SUBUNIT PROTEIN BL19M"/>
    <property type="match status" value="1"/>
</dbReference>
<dbReference type="PANTHER" id="PTHR15680">
    <property type="entry name" value="RIBOSOMAL PROTEIN L19"/>
    <property type="match status" value="1"/>
</dbReference>
<dbReference type="Pfam" id="PF01245">
    <property type="entry name" value="Ribosomal_L19"/>
    <property type="match status" value="1"/>
</dbReference>
<dbReference type="PIRSF" id="PIRSF002191">
    <property type="entry name" value="Ribosomal_L19"/>
    <property type="match status" value="1"/>
</dbReference>
<dbReference type="PRINTS" id="PR00061">
    <property type="entry name" value="RIBOSOMALL19"/>
</dbReference>
<dbReference type="SUPFAM" id="SSF50104">
    <property type="entry name" value="Translation proteins SH3-like domain"/>
    <property type="match status" value="1"/>
</dbReference>
<dbReference type="PROSITE" id="PS01015">
    <property type="entry name" value="RIBOSOMAL_L19"/>
    <property type="match status" value="1"/>
</dbReference>
<organism>
    <name type="scientific">Acaryochloris marina (strain MBIC 11017)</name>
    <dbReference type="NCBI Taxonomy" id="329726"/>
    <lineage>
        <taxon>Bacteria</taxon>
        <taxon>Bacillati</taxon>
        <taxon>Cyanobacteriota</taxon>
        <taxon>Cyanophyceae</taxon>
        <taxon>Acaryochloridales</taxon>
        <taxon>Acaryochloridaceae</taxon>
        <taxon>Acaryochloris</taxon>
    </lineage>
</organism>
<gene>
    <name evidence="1" type="primary">rplS</name>
    <name evidence="1" type="synonym">rpl19</name>
    <name type="ordered locus">AM1_2861</name>
</gene>
<keyword id="KW-1185">Reference proteome</keyword>
<keyword id="KW-0687">Ribonucleoprotein</keyword>
<keyword id="KW-0689">Ribosomal protein</keyword>